<accession>Q7UWS5</accession>
<evidence type="ECO:0000255" key="1">
    <source>
        <dbReference type="HAMAP-Rule" id="MF_00425"/>
    </source>
</evidence>
<evidence type="ECO:0000305" key="2"/>
<reference key="1">
    <citation type="journal article" date="2003" name="Proc. Natl. Acad. Sci. U.S.A.">
        <title>Complete genome sequence of the marine planctomycete Pirellula sp. strain 1.</title>
        <authorList>
            <person name="Gloeckner F.O."/>
            <person name="Kube M."/>
            <person name="Bauer M."/>
            <person name="Teeling H."/>
            <person name="Lombardot T."/>
            <person name="Ludwig W."/>
            <person name="Gade D."/>
            <person name="Beck A."/>
            <person name="Borzym K."/>
            <person name="Heitmann K."/>
            <person name="Rabus R."/>
            <person name="Schlesner H."/>
            <person name="Amann R."/>
            <person name="Reinhardt R."/>
        </authorList>
    </citation>
    <scope>NUCLEOTIDE SEQUENCE [LARGE SCALE GENOMIC DNA]</scope>
    <source>
        <strain>DSM 10527 / NCIMB 13988 / SH1</strain>
    </source>
</reference>
<proteinExistence type="inferred from homology"/>
<sequence>MATTQSVTRIKKGLDLPITGCPEQHMEAGPAIRQVALLGDDYIGMKPTMLVSAGDRVVLGQPVFEDKKTPGVIYTAPASGTVVDVVRGAKRKFEAVVIDVDNDSTETTTIDGIAGSDPISIAREKLVDGLVQIGLWSAFRTRPFGKVPTIESRPHSIFVTAIDTNPLAADPAVVLADRKDQFVIGLQALTRLTDGAVHLCQAEKASIPGGDVAGVQSASFAGPHPAGLPGTHIHHLDPVSLNKTVWYIGYQDVIAIGSFLQTGQLDTRRVISLAGPKVNQPRLIETRLGACIDELIDGEVDTSVKLRVISGSVLNGHIATAPHQFLGRYDNQVSVIEEGDHREFLGWQKPGFDKFSVSRIFASAMTPDRKFDFTSSTGGSERAMVPLGTYEKVMPMDILATQLLRALIVRDTDSAQQLGVLELEEEDLALCTFVCPGKYEYGSLIRENLTTIEREG</sequence>
<comment type="function">
    <text evidence="1">NQR complex catalyzes the reduction of ubiquinone-1 to ubiquinol by two successive reactions, coupled with the transport of Na(+) ions from the cytoplasm to the periplasm. NqrA to NqrE are probably involved in the second step, the conversion of ubisemiquinone to ubiquinol.</text>
</comment>
<comment type="catalytic activity">
    <reaction evidence="1">
        <text>a ubiquinone + n Na(+)(in) + NADH + H(+) = a ubiquinol + n Na(+)(out) + NAD(+)</text>
        <dbReference type="Rhea" id="RHEA:47748"/>
        <dbReference type="Rhea" id="RHEA-COMP:9565"/>
        <dbReference type="Rhea" id="RHEA-COMP:9566"/>
        <dbReference type="ChEBI" id="CHEBI:15378"/>
        <dbReference type="ChEBI" id="CHEBI:16389"/>
        <dbReference type="ChEBI" id="CHEBI:17976"/>
        <dbReference type="ChEBI" id="CHEBI:29101"/>
        <dbReference type="ChEBI" id="CHEBI:57540"/>
        <dbReference type="ChEBI" id="CHEBI:57945"/>
        <dbReference type="EC" id="7.2.1.1"/>
    </reaction>
</comment>
<comment type="subunit">
    <text evidence="1">Composed of six subunits; NqrA, NqrB, NqrC, NqrD, NqrE and NqrF.</text>
</comment>
<comment type="similarity">
    <text evidence="1">Belongs to the NqrA family.</text>
</comment>
<comment type="sequence caution" evidence="2">
    <conflict type="erroneous initiation">
        <sequence resource="EMBL-CDS" id="CAD72287"/>
    </conflict>
</comment>
<keyword id="KW-0406">Ion transport</keyword>
<keyword id="KW-0520">NAD</keyword>
<keyword id="KW-1185">Reference proteome</keyword>
<keyword id="KW-0915">Sodium</keyword>
<keyword id="KW-0739">Sodium transport</keyword>
<keyword id="KW-1278">Translocase</keyword>
<keyword id="KW-0813">Transport</keyword>
<keyword id="KW-0830">Ubiquinone</keyword>
<name>NQRA_RHOBA</name>
<gene>
    <name evidence="1" type="primary">nqrA</name>
    <name type="ordered locus">RB1831</name>
</gene>
<dbReference type="EC" id="7.2.1.1" evidence="1"/>
<dbReference type="EMBL" id="BX294135">
    <property type="protein sequence ID" value="CAD72287.1"/>
    <property type="status" value="ALT_INIT"/>
    <property type="molecule type" value="Genomic_DNA"/>
</dbReference>
<dbReference type="RefSeq" id="NP_864606.1">
    <property type="nucleotide sequence ID" value="NC_005027.1"/>
</dbReference>
<dbReference type="RefSeq" id="WP_164921455.1">
    <property type="nucleotide sequence ID" value="NC_005027.1"/>
</dbReference>
<dbReference type="SMR" id="Q7UWS5"/>
<dbReference type="STRING" id="243090.RB1831"/>
<dbReference type="EnsemblBacteria" id="CAD72287">
    <property type="protein sequence ID" value="CAD72287"/>
    <property type="gene ID" value="RB1831"/>
</dbReference>
<dbReference type="KEGG" id="rba:RB1831"/>
<dbReference type="PATRIC" id="fig|243090.15.peg.840"/>
<dbReference type="eggNOG" id="COG1726">
    <property type="taxonomic scope" value="Bacteria"/>
</dbReference>
<dbReference type="HOGENOM" id="CLU_046656_0_0_0"/>
<dbReference type="InParanoid" id="Q7UWS5"/>
<dbReference type="OrthoDB" id="9774536at2"/>
<dbReference type="Proteomes" id="UP000001025">
    <property type="component" value="Chromosome"/>
</dbReference>
<dbReference type="GO" id="GO:0016655">
    <property type="term" value="F:oxidoreductase activity, acting on NAD(P)H, quinone or similar compound as acceptor"/>
    <property type="evidence" value="ECO:0007669"/>
    <property type="project" value="UniProtKB-UniRule"/>
</dbReference>
<dbReference type="GO" id="GO:0006814">
    <property type="term" value="P:sodium ion transport"/>
    <property type="evidence" value="ECO:0007669"/>
    <property type="project" value="UniProtKB-UniRule"/>
</dbReference>
<dbReference type="HAMAP" id="MF_00425">
    <property type="entry name" value="NqrA"/>
    <property type="match status" value="1"/>
</dbReference>
<dbReference type="InterPro" id="IPR008703">
    <property type="entry name" value="NqrA"/>
</dbReference>
<dbReference type="InterPro" id="IPR056148">
    <property type="entry name" value="NQRA_2nd"/>
</dbReference>
<dbReference type="InterPro" id="IPR022615">
    <property type="entry name" value="NqrA_C_domain"/>
</dbReference>
<dbReference type="InterPro" id="IPR056147">
    <property type="entry name" value="NQRA_N"/>
</dbReference>
<dbReference type="NCBIfam" id="TIGR01936">
    <property type="entry name" value="nqrA"/>
    <property type="match status" value="1"/>
</dbReference>
<dbReference type="NCBIfam" id="NF003759">
    <property type="entry name" value="PRK05352.1-2"/>
    <property type="match status" value="1"/>
</dbReference>
<dbReference type="PANTHER" id="PTHR37839">
    <property type="entry name" value="NA(+)-TRANSLOCATING NADH-QUINONE REDUCTASE SUBUNIT A"/>
    <property type="match status" value="1"/>
</dbReference>
<dbReference type="PANTHER" id="PTHR37839:SF1">
    <property type="entry name" value="NA(+)-TRANSLOCATING NADH-QUINONE REDUCTASE SUBUNIT A"/>
    <property type="match status" value="1"/>
</dbReference>
<dbReference type="Pfam" id="PF24836">
    <property type="entry name" value="NQRA_2nd"/>
    <property type="match status" value="1"/>
</dbReference>
<dbReference type="Pfam" id="PF05896">
    <property type="entry name" value="NQRA_N"/>
    <property type="match status" value="1"/>
</dbReference>
<dbReference type="Pfam" id="PF11973">
    <property type="entry name" value="NQRA_SLBB"/>
    <property type="match status" value="1"/>
</dbReference>
<protein>
    <recommendedName>
        <fullName evidence="1">Na(+)-translocating NADH-quinone reductase subunit A</fullName>
        <shortName evidence="1">Na(+)-NQR subunit A</shortName>
        <shortName evidence="1">Na(+)-translocating NQR subunit A</shortName>
        <ecNumber evidence="1">7.2.1.1</ecNumber>
    </recommendedName>
    <alternativeName>
        <fullName evidence="1">NQR complex subunit A</fullName>
    </alternativeName>
    <alternativeName>
        <fullName evidence="1">NQR-1 subunit A</fullName>
    </alternativeName>
</protein>
<organism>
    <name type="scientific">Rhodopirellula baltica (strain DSM 10527 / NCIMB 13988 / SH1)</name>
    <dbReference type="NCBI Taxonomy" id="243090"/>
    <lineage>
        <taxon>Bacteria</taxon>
        <taxon>Pseudomonadati</taxon>
        <taxon>Planctomycetota</taxon>
        <taxon>Planctomycetia</taxon>
        <taxon>Pirellulales</taxon>
        <taxon>Pirellulaceae</taxon>
        <taxon>Rhodopirellula</taxon>
    </lineage>
</organism>
<feature type="chain" id="PRO_0000227020" description="Na(+)-translocating NADH-quinone reductase subunit A">
    <location>
        <begin position="1"/>
        <end position="456"/>
    </location>
</feature>